<name>SODM2_HALVD</name>
<accession>Q03301</accession>
<accession>D4GXS2</accession>
<comment type="function">
    <text>Destroys superoxide anion radicals which are normally produced within the cells and which are toxic to biological systems.</text>
</comment>
<comment type="catalytic activity">
    <reaction>
        <text>2 superoxide + 2 H(+) = H2O2 + O2</text>
        <dbReference type="Rhea" id="RHEA:20696"/>
        <dbReference type="ChEBI" id="CHEBI:15378"/>
        <dbReference type="ChEBI" id="CHEBI:15379"/>
        <dbReference type="ChEBI" id="CHEBI:16240"/>
        <dbReference type="ChEBI" id="CHEBI:18421"/>
        <dbReference type="EC" id="1.15.1.1"/>
    </reaction>
</comment>
<comment type="cofactor">
    <cofactor evidence="1">
        <name>Mn(2+)</name>
        <dbReference type="ChEBI" id="CHEBI:29035"/>
    </cofactor>
    <text evidence="1">Binds 1 Mn(2+) ion per subunit.</text>
</comment>
<comment type="similarity">
    <text evidence="2">Belongs to the iron/manganese superoxide dismutase family.</text>
</comment>
<evidence type="ECO:0000250" key="1"/>
<evidence type="ECO:0000305" key="2"/>
<feature type="chain" id="PRO_0000160117" description="Superoxide dismutase [Mn] 2">
    <location>
        <begin position="1"/>
        <end position="199"/>
    </location>
</feature>
<feature type="binding site" evidence="1">
    <location>
        <position position="28"/>
    </location>
    <ligand>
        <name>Mn(2+)</name>
        <dbReference type="ChEBI" id="CHEBI:29035"/>
    </ligand>
</feature>
<feature type="binding site" evidence="1">
    <location>
        <position position="75"/>
    </location>
    <ligand>
        <name>Mn(2+)</name>
        <dbReference type="ChEBI" id="CHEBI:29035"/>
    </ligand>
</feature>
<feature type="binding site" evidence="1">
    <location>
        <position position="157"/>
    </location>
    <ligand>
        <name>Mn(2+)</name>
        <dbReference type="ChEBI" id="CHEBI:29035"/>
    </ligand>
</feature>
<feature type="binding site" evidence="1">
    <location>
        <position position="161"/>
    </location>
    <ligand>
        <name>Mn(2+)</name>
        <dbReference type="ChEBI" id="CHEBI:29035"/>
    </ligand>
</feature>
<feature type="sequence conflict" description="In Ref. 1; AAA73376." evidence="2" ref="1">
    <original>AE</original>
    <variation>DD</variation>
    <location>
        <begin position="42"/>
        <end position="43"/>
    </location>
</feature>
<feature type="sequence conflict" description="In Ref. 1; AAA73376." evidence="2" ref="1">
    <original>L</original>
    <variation>V</variation>
    <location>
        <position position="62"/>
    </location>
</feature>
<feature type="sequence conflict" description="In Ref. 1; AAA73376." evidence="2" ref="1">
    <original>A</original>
    <variation>L</variation>
    <location>
        <position position="93"/>
    </location>
</feature>
<feature type="sequence conflict" description="In Ref. 1; AAA73376." evidence="2" ref="1">
    <original>G</original>
    <variation>A</variation>
    <location>
        <position position="120"/>
    </location>
</feature>
<organism>
    <name type="scientific">Haloferax volcanii (strain ATCC 29605 / DSM 3757 / JCM 8879 / NBRC 14742 / NCIMB 2012 / VKM B-1768 / DS2)</name>
    <name type="common">Halobacterium volcanii</name>
    <dbReference type="NCBI Taxonomy" id="309800"/>
    <lineage>
        <taxon>Archaea</taxon>
        <taxon>Methanobacteriati</taxon>
        <taxon>Methanobacteriota</taxon>
        <taxon>Stenosarchaea group</taxon>
        <taxon>Halobacteria</taxon>
        <taxon>Halobacteriales</taxon>
        <taxon>Haloferacaceae</taxon>
        <taxon>Haloferax</taxon>
    </lineage>
</organism>
<protein>
    <recommendedName>
        <fullName>Superoxide dismutase [Mn] 2</fullName>
        <ecNumber>1.15.1.1</ecNumber>
    </recommendedName>
</protein>
<gene>
    <name type="primary">sod2</name>
    <name type="ordered locus">HVO_2913</name>
</gene>
<reference key="1">
    <citation type="journal article" date="1993" name="J. Bacteriol.">
        <title>Characterization of paralogous and orthologous members of the superoxide dismutase gene family from genera of the halophilic archaebacteria.</title>
        <authorList>
            <person name="Joshi P.B."/>
            <person name="Dennis P.P."/>
        </authorList>
    </citation>
    <scope>NUCLEOTIDE SEQUENCE [GENOMIC DNA]</scope>
    <source>
        <strain>ATCC 29605 / DSM 3757 / JCM 8879 / NBRC 14742 / NCIMB 2012 / VKM B-1768 / DS2</strain>
    </source>
</reference>
<reference key="2">
    <citation type="journal article" date="2010" name="PLoS ONE">
        <title>The complete genome sequence of Haloferax volcanii DS2, a model archaeon.</title>
        <authorList>
            <person name="Hartman A.L."/>
            <person name="Norais C."/>
            <person name="Badger J.H."/>
            <person name="Delmas S."/>
            <person name="Haldenby S."/>
            <person name="Madupu R."/>
            <person name="Robinson J."/>
            <person name="Khouri H."/>
            <person name="Ren Q."/>
            <person name="Lowe T.M."/>
            <person name="Maupin-Furlow J."/>
            <person name="Pohlschroder M."/>
            <person name="Daniels C."/>
            <person name="Pfeiffer F."/>
            <person name="Allers T."/>
            <person name="Eisen J.A."/>
        </authorList>
    </citation>
    <scope>NUCLEOTIDE SEQUENCE [LARGE SCALE GENOMIC DNA]</scope>
    <source>
        <strain>ATCC 29605 / DSM 3757 / JCM 8879 / NBRC 14742 / NCIMB 2012 / VKM B-1768 / DS2</strain>
    </source>
</reference>
<sequence>MSYELDPLPYEYDALEPHISEQVLTWHHDTHHQGYVNGWNAAEETLAENREAGEFGSSAGALRNVTHNGSGHILHDLFWQNMSPEGGDEPEGALAERIAEDFGSYEAWKGEFEAAAGAAGGWALLVYDSFSNQLRNVVVDKHDQGALWGSHPILALDVWEHSYYHDYGPARGDFVSAFFEVVDWDEPAARYEQAVELFE</sequence>
<keyword id="KW-0464">Manganese</keyword>
<keyword id="KW-0479">Metal-binding</keyword>
<keyword id="KW-0560">Oxidoreductase</keyword>
<keyword id="KW-1185">Reference proteome</keyword>
<dbReference type="EC" id="1.15.1.1"/>
<dbReference type="EMBL" id="M97487">
    <property type="protein sequence ID" value="AAA73376.1"/>
    <property type="molecule type" value="Genomic_DNA"/>
</dbReference>
<dbReference type="EMBL" id="CP001956">
    <property type="protein sequence ID" value="ADE03299.1"/>
    <property type="molecule type" value="Genomic_DNA"/>
</dbReference>
<dbReference type="PIR" id="T50046">
    <property type="entry name" value="T50046"/>
</dbReference>
<dbReference type="RefSeq" id="WP_013035375.1">
    <property type="nucleotide sequence ID" value="NC_013967.1"/>
</dbReference>
<dbReference type="SMR" id="Q03301"/>
<dbReference type="STRING" id="309800.HVO_2913"/>
<dbReference type="PaxDb" id="309800-C498_00215"/>
<dbReference type="EnsemblBacteria" id="ADE03299">
    <property type="protein sequence ID" value="ADE03299"/>
    <property type="gene ID" value="HVO_2913"/>
</dbReference>
<dbReference type="GeneID" id="8924540"/>
<dbReference type="KEGG" id="hvo:HVO_2913"/>
<dbReference type="HOGENOM" id="CLU_031625_2_0_2"/>
<dbReference type="Proteomes" id="UP000008243">
    <property type="component" value="Chromosome"/>
</dbReference>
<dbReference type="GO" id="GO:0046872">
    <property type="term" value="F:metal ion binding"/>
    <property type="evidence" value="ECO:0007669"/>
    <property type="project" value="UniProtKB-KW"/>
</dbReference>
<dbReference type="GO" id="GO:0004784">
    <property type="term" value="F:superoxide dismutase activity"/>
    <property type="evidence" value="ECO:0007669"/>
    <property type="project" value="UniProtKB-EC"/>
</dbReference>
<dbReference type="FunFam" id="3.55.40.20:FF:000004">
    <property type="entry name" value="Superoxide dismutase [Fe]"/>
    <property type="match status" value="1"/>
</dbReference>
<dbReference type="Gene3D" id="1.10.287.990">
    <property type="entry name" value="Fe,Mn superoxide dismutase (SOD) domain"/>
    <property type="match status" value="1"/>
</dbReference>
<dbReference type="Gene3D" id="3.55.40.20">
    <property type="entry name" value="Iron/manganese superoxide dismutase, C-terminal domain"/>
    <property type="match status" value="1"/>
</dbReference>
<dbReference type="InterPro" id="IPR050265">
    <property type="entry name" value="Fe/Mn_Superoxide_Dismutase"/>
</dbReference>
<dbReference type="InterPro" id="IPR001189">
    <property type="entry name" value="Mn/Fe_SOD"/>
</dbReference>
<dbReference type="InterPro" id="IPR019833">
    <property type="entry name" value="Mn/Fe_SOD_BS"/>
</dbReference>
<dbReference type="InterPro" id="IPR019832">
    <property type="entry name" value="Mn/Fe_SOD_C"/>
</dbReference>
<dbReference type="InterPro" id="IPR019831">
    <property type="entry name" value="Mn/Fe_SOD_N"/>
</dbReference>
<dbReference type="InterPro" id="IPR036324">
    <property type="entry name" value="Mn/Fe_SOD_N_sf"/>
</dbReference>
<dbReference type="InterPro" id="IPR036314">
    <property type="entry name" value="SOD_C_sf"/>
</dbReference>
<dbReference type="InterPro" id="IPR054865">
    <property type="entry name" value="Superox_dis_Halo"/>
</dbReference>
<dbReference type="NCBIfam" id="NF041312">
    <property type="entry name" value="Superox_dis_Halo"/>
    <property type="match status" value="1"/>
</dbReference>
<dbReference type="PANTHER" id="PTHR11404">
    <property type="entry name" value="SUPEROXIDE DISMUTASE 2"/>
    <property type="match status" value="1"/>
</dbReference>
<dbReference type="PANTHER" id="PTHR11404:SF6">
    <property type="entry name" value="SUPEROXIDE DISMUTASE [MN], MITOCHONDRIAL"/>
    <property type="match status" value="1"/>
</dbReference>
<dbReference type="Pfam" id="PF02777">
    <property type="entry name" value="Sod_Fe_C"/>
    <property type="match status" value="1"/>
</dbReference>
<dbReference type="Pfam" id="PF00081">
    <property type="entry name" value="Sod_Fe_N"/>
    <property type="match status" value="1"/>
</dbReference>
<dbReference type="PIRSF" id="PIRSF000349">
    <property type="entry name" value="SODismutase"/>
    <property type="match status" value="1"/>
</dbReference>
<dbReference type="PRINTS" id="PR01703">
    <property type="entry name" value="MNSODISMTASE"/>
</dbReference>
<dbReference type="SUPFAM" id="SSF54719">
    <property type="entry name" value="Fe,Mn superoxide dismutase (SOD), C-terminal domain"/>
    <property type="match status" value="1"/>
</dbReference>
<dbReference type="SUPFAM" id="SSF46609">
    <property type="entry name" value="Fe,Mn superoxide dismutase (SOD), N-terminal domain"/>
    <property type="match status" value="1"/>
</dbReference>
<dbReference type="PROSITE" id="PS00088">
    <property type="entry name" value="SOD_MN"/>
    <property type="match status" value="1"/>
</dbReference>
<proteinExistence type="inferred from homology"/>